<protein>
    <recommendedName>
        <fullName evidence="1">tRNA pseudouridine synthase A</fullName>
        <ecNumber evidence="1">5.4.99.12</ecNumber>
    </recommendedName>
    <alternativeName>
        <fullName evidence="1">tRNA pseudouridine(38-40) synthase</fullName>
    </alternativeName>
    <alternativeName>
        <fullName evidence="1">tRNA pseudouridylate synthase I</fullName>
    </alternativeName>
    <alternativeName>
        <fullName evidence="1">tRNA-uridine isomerase I</fullName>
    </alternativeName>
</protein>
<gene>
    <name evidence="1" type="primary">truA</name>
    <name type="ordered locus">PAE1142</name>
</gene>
<proteinExistence type="inferred from homology"/>
<organism>
    <name type="scientific">Pyrobaculum aerophilum (strain ATCC 51768 / DSM 7523 / JCM 9630 / CIP 104966 / NBRC 100827 / IM2)</name>
    <dbReference type="NCBI Taxonomy" id="178306"/>
    <lineage>
        <taxon>Archaea</taxon>
        <taxon>Thermoproteota</taxon>
        <taxon>Thermoprotei</taxon>
        <taxon>Thermoproteales</taxon>
        <taxon>Thermoproteaceae</taxon>
        <taxon>Pyrobaculum</taxon>
    </lineage>
</organism>
<sequence>MPYLYRIAYDGTMFYGFTGHPNSLEPRLRLIFGEILGRGSRTDPGVSAVGNVVMTGRKMALGYVNSKMPKGAWAWGIAEVPEGFNPRRAKLRRYLYVAPHWGEDVDVMREAAKLLTGTHDYSSFIQLRGEKHTPTVTTVYDIDVTLRGDLIFIYFAGRGFRNKMIRKMAWALLAAGRGVLSVDDLADLLKKPRPGAVPSAPAEGLVLLDIVYDVKFEVDFSALRKAYVYFLSKSRHLSAHAAALRAAGEALAMWES</sequence>
<evidence type="ECO:0000255" key="1">
    <source>
        <dbReference type="HAMAP-Rule" id="MF_00171"/>
    </source>
</evidence>
<accession>Q8ZXR6</accession>
<name>TRUA_PYRAE</name>
<dbReference type="EC" id="5.4.99.12" evidence="1"/>
<dbReference type="EMBL" id="AE009441">
    <property type="protein sequence ID" value="AAL63280.1"/>
    <property type="molecule type" value="Genomic_DNA"/>
</dbReference>
<dbReference type="RefSeq" id="WP_011007752.1">
    <property type="nucleotide sequence ID" value="NC_003364.1"/>
</dbReference>
<dbReference type="SMR" id="Q8ZXR6"/>
<dbReference type="STRING" id="178306.PAE1142"/>
<dbReference type="EnsemblBacteria" id="AAL63280">
    <property type="protein sequence ID" value="AAL63280"/>
    <property type="gene ID" value="PAE1142"/>
</dbReference>
<dbReference type="GeneID" id="1465518"/>
<dbReference type="KEGG" id="pai:PAE1142"/>
<dbReference type="PATRIC" id="fig|178306.9.peg.844"/>
<dbReference type="eggNOG" id="arCOG04449">
    <property type="taxonomic scope" value="Archaea"/>
</dbReference>
<dbReference type="HOGENOM" id="CLU_014673_4_2_2"/>
<dbReference type="InParanoid" id="Q8ZXR6"/>
<dbReference type="Proteomes" id="UP000002439">
    <property type="component" value="Chromosome"/>
</dbReference>
<dbReference type="GO" id="GO:0009982">
    <property type="term" value="F:pseudouridine synthase activity"/>
    <property type="evidence" value="ECO:0000318"/>
    <property type="project" value="GO_Central"/>
</dbReference>
<dbReference type="GO" id="GO:0003723">
    <property type="term" value="F:RNA binding"/>
    <property type="evidence" value="ECO:0007669"/>
    <property type="project" value="InterPro"/>
</dbReference>
<dbReference type="GO" id="GO:0160147">
    <property type="term" value="F:tRNA pseudouridine(38-40) synthase activity"/>
    <property type="evidence" value="ECO:0007669"/>
    <property type="project" value="UniProtKB-EC"/>
</dbReference>
<dbReference type="GO" id="GO:0031119">
    <property type="term" value="P:tRNA pseudouridine synthesis"/>
    <property type="evidence" value="ECO:0000318"/>
    <property type="project" value="GO_Central"/>
</dbReference>
<dbReference type="Gene3D" id="3.30.70.660">
    <property type="entry name" value="Pseudouridine synthase I, catalytic domain, C-terminal subdomain"/>
    <property type="match status" value="1"/>
</dbReference>
<dbReference type="Gene3D" id="3.30.70.580">
    <property type="entry name" value="Pseudouridine synthase I, catalytic domain, N-terminal subdomain"/>
    <property type="match status" value="1"/>
</dbReference>
<dbReference type="HAMAP" id="MF_00171">
    <property type="entry name" value="TruA"/>
    <property type="match status" value="1"/>
</dbReference>
<dbReference type="InterPro" id="IPR020103">
    <property type="entry name" value="PsdUridine_synth_cat_dom_sf"/>
</dbReference>
<dbReference type="InterPro" id="IPR001406">
    <property type="entry name" value="PsdUridine_synth_TruA"/>
</dbReference>
<dbReference type="InterPro" id="IPR020097">
    <property type="entry name" value="PsdUridine_synth_TruA_a/b_dom"/>
</dbReference>
<dbReference type="InterPro" id="IPR020095">
    <property type="entry name" value="PsdUridine_synth_TruA_C"/>
</dbReference>
<dbReference type="InterPro" id="IPR020094">
    <property type="entry name" value="TruA/RsuA/RluB/E/F_N"/>
</dbReference>
<dbReference type="PANTHER" id="PTHR11142">
    <property type="entry name" value="PSEUDOURIDYLATE SYNTHASE"/>
    <property type="match status" value="1"/>
</dbReference>
<dbReference type="PANTHER" id="PTHR11142:SF0">
    <property type="entry name" value="TRNA PSEUDOURIDINE SYNTHASE-LIKE 1"/>
    <property type="match status" value="1"/>
</dbReference>
<dbReference type="Pfam" id="PF01416">
    <property type="entry name" value="PseudoU_synth_1"/>
    <property type="match status" value="1"/>
</dbReference>
<dbReference type="PIRSF" id="PIRSF001430">
    <property type="entry name" value="tRNA_psdUrid_synth"/>
    <property type="match status" value="1"/>
</dbReference>
<dbReference type="SUPFAM" id="SSF55120">
    <property type="entry name" value="Pseudouridine synthase"/>
    <property type="match status" value="1"/>
</dbReference>
<feature type="chain" id="PRO_0000057511" description="tRNA pseudouridine synthase A">
    <location>
        <begin position="1"/>
        <end position="256"/>
    </location>
</feature>
<feature type="active site" description="Nucleophile" evidence="1">
    <location>
        <position position="43"/>
    </location>
</feature>
<feature type="binding site" evidence="1">
    <location>
        <position position="94"/>
    </location>
    <ligand>
        <name>substrate</name>
    </ligand>
</feature>
<keyword id="KW-0413">Isomerase</keyword>
<keyword id="KW-1185">Reference proteome</keyword>
<keyword id="KW-0819">tRNA processing</keyword>
<reference key="1">
    <citation type="journal article" date="2002" name="Proc. Natl. Acad. Sci. U.S.A.">
        <title>Genome sequence of the hyperthermophilic crenarchaeon Pyrobaculum aerophilum.</title>
        <authorList>
            <person name="Fitz-Gibbon S.T."/>
            <person name="Ladner H."/>
            <person name="Kim U.-J."/>
            <person name="Stetter K.O."/>
            <person name="Simon M.I."/>
            <person name="Miller J.H."/>
        </authorList>
    </citation>
    <scope>NUCLEOTIDE SEQUENCE [LARGE SCALE GENOMIC DNA]</scope>
    <source>
        <strain>ATCC 51768 / DSM 7523 / JCM 9630 / CIP 104966 / NBRC 100827 / IM2</strain>
    </source>
</reference>
<comment type="function">
    <text evidence="1">Formation of pseudouridine at positions 38, 39 and 40 in the anticodon stem and loop of transfer RNAs.</text>
</comment>
<comment type="catalytic activity">
    <reaction evidence="1">
        <text>uridine(38/39/40) in tRNA = pseudouridine(38/39/40) in tRNA</text>
        <dbReference type="Rhea" id="RHEA:22376"/>
        <dbReference type="Rhea" id="RHEA-COMP:10085"/>
        <dbReference type="Rhea" id="RHEA-COMP:10087"/>
        <dbReference type="ChEBI" id="CHEBI:65314"/>
        <dbReference type="ChEBI" id="CHEBI:65315"/>
        <dbReference type="EC" id="5.4.99.12"/>
    </reaction>
</comment>
<comment type="similarity">
    <text evidence="1">Belongs to the tRNA pseudouridine synthase TruA family.</text>
</comment>